<sequence length="85" mass="9310">MAHKKGQGSTQNNRDSIGRRLGVKKFGGEFVRAGNIIIRQRGTATHAGSNVGLGKDHTIFALIDGFVKFERKDKNRKKVSVYPAA</sequence>
<reference key="1">
    <citation type="submission" date="2007-07" db="EMBL/GenBank/DDBJ databases">
        <title>Genome sequence of Campylobacter curvus 525.92 isolated from human feces.</title>
        <authorList>
            <person name="Fouts D.E."/>
            <person name="Mongodin E.F."/>
            <person name="Puiu D."/>
            <person name="Sebastian Y."/>
            <person name="Miller W.G."/>
            <person name="Mandrell R.E."/>
            <person name="Lastovica A.J."/>
            <person name="Nelson K.E."/>
        </authorList>
    </citation>
    <scope>NUCLEOTIDE SEQUENCE [LARGE SCALE GENOMIC DNA]</scope>
    <source>
        <strain>525.92</strain>
    </source>
</reference>
<protein>
    <recommendedName>
        <fullName evidence="1">Large ribosomal subunit protein bL27</fullName>
    </recommendedName>
    <alternativeName>
        <fullName evidence="2">50S ribosomal protein L27</fullName>
    </alternativeName>
</protein>
<comment type="similarity">
    <text evidence="1">Belongs to the bacterial ribosomal protein bL27 family.</text>
</comment>
<name>RL27_CAMC5</name>
<organism>
    <name type="scientific">Campylobacter curvus (strain 525.92)</name>
    <dbReference type="NCBI Taxonomy" id="360105"/>
    <lineage>
        <taxon>Bacteria</taxon>
        <taxon>Pseudomonadati</taxon>
        <taxon>Campylobacterota</taxon>
        <taxon>Epsilonproteobacteria</taxon>
        <taxon>Campylobacterales</taxon>
        <taxon>Campylobacteraceae</taxon>
        <taxon>Campylobacter</taxon>
    </lineage>
</organism>
<evidence type="ECO:0000255" key="1">
    <source>
        <dbReference type="HAMAP-Rule" id="MF_00539"/>
    </source>
</evidence>
<evidence type="ECO:0000305" key="2"/>
<keyword id="KW-1185">Reference proteome</keyword>
<keyword id="KW-0687">Ribonucleoprotein</keyword>
<keyword id="KW-0689">Ribosomal protein</keyword>
<gene>
    <name evidence="1" type="primary">rpmA</name>
    <name type="ordered locus">Ccur92_15180</name>
    <name type="ORF">CCV52592_1725</name>
</gene>
<accession>A7H030</accession>
<dbReference type="EMBL" id="CP000767">
    <property type="protein sequence ID" value="EAU01042.1"/>
    <property type="molecule type" value="Genomic_DNA"/>
</dbReference>
<dbReference type="RefSeq" id="WP_009649335.1">
    <property type="nucleotide sequence ID" value="NC_009715.2"/>
</dbReference>
<dbReference type="SMR" id="A7H030"/>
<dbReference type="STRING" id="360105.CCV52592_1725"/>
<dbReference type="GeneID" id="61002813"/>
<dbReference type="KEGG" id="ccv:CCV52592_1725"/>
<dbReference type="HOGENOM" id="CLU_095424_4_0_7"/>
<dbReference type="OrthoDB" id="9803474at2"/>
<dbReference type="Proteomes" id="UP000006380">
    <property type="component" value="Chromosome"/>
</dbReference>
<dbReference type="GO" id="GO:0022625">
    <property type="term" value="C:cytosolic large ribosomal subunit"/>
    <property type="evidence" value="ECO:0007669"/>
    <property type="project" value="TreeGrafter"/>
</dbReference>
<dbReference type="GO" id="GO:0003735">
    <property type="term" value="F:structural constituent of ribosome"/>
    <property type="evidence" value="ECO:0007669"/>
    <property type="project" value="InterPro"/>
</dbReference>
<dbReference type="GO" id="GO:0006412">
    <property type="term" value="P:translation"/>
    <property type="evidence" value="ECO:0007669"/>
    <property type="project" value="UniProtKB-UniRule"/>
</dbReference>
<dbReference type="FunFam" id="2.40.50.100:FF:000004">
    <property type="entry name" value="50S ribosomal protein L27"/>
    <property type="match status" value="1"/>
</dbReference>
<dbReference type="Gene3D" id="2.40.50.100">
    <property type="match status" value="1"/>
</dbReference>
<dbReference type="HAMAP" id="MF_00539">
    <property type="entry name" value="Ribosomal_bL27"/>
    <property type="match status" value="1"/>
</dbReference>
<dbReference type="InterPro" id="IPR001684">
    <property type="entry name" value="Ribosomal_bL27"/>
</dbReference>
<dbReference type="InterPro" id="IPR018261">
    <property type="entry name" value="Ribosomal_bL27_CS"/>
</dbReference>
<dbReference type="NCBIfam" id="TIGR00062">
    <property type="entry name" value="L27"/>
    <property type="match status" value="1"/>
</dbReference>
<dbReference type="PANTHER" id="PTHR15893:SF0">
    <property type="entry name" value="LARGE RIBOSOMAL SUBUNIT PROTEIN BL27M"/>
    <property type="match status" value="1"/>
</dbReference>
<dbReference type="PANTHER" id="PTHR15893">
    <property type="entry name" value="RIBOSOMAL PROTEIN L27"/>
    <property type="match status" value="1"/>
</dbReference>
<dbReference type="Pfam" id="PF01016">
    <property type="entry name" value="Ribosomal_L27"/>
    <property type="match status" value="1"/>
</dbReference>
<dbReference type="PRINTS" id="PR00063">
    <property type="entry name" value="RIBOSOMALL27"/>
</dbReference>
<dbReference type="SUPFAM" id="SSF110324">
    <property type="entry name" value="Ribosomal L27 protein-like"/>
    <property type="match status" value="1"/>
</dbReference>
<dbReference type="PROSITE" id="PS00831">
    <property type="entry name" value="RIBOSOMAL_L27"/>
    <property type="match status" value="1"/>
</dbReference>
<feature type="chain" id="PRO_1000017440" description="Large ribosomal subunit protein bL27">
    <location>
        <begin position="1"/>
        <end position="85"/>
    </location>
</feature>
<proteinExistence type="inferred from homology"/>